<evidence type="ECO:0000255" key="1">
    <source>
        <dbReference type="HAMAP-Rule" id="MF_00422"/>
    </source>
</evidence>
<evidence type="ECO:0000256" key="2">
    <source>
        <dbReference type="SAM" id="MobiDB-lite"/>
    </source>
</evidence>
<sequence length="161" mass="16956">MSDEGDVADEAVADGAENADSRGSGGRTALVTKPVVRPQRPTGKRSRSRAAGADADVDVEEPSTAASEATGVAKDDSTTKAVSKAARAKKASKPKARSVNPIAFVYNYLKQVVAEMRKVIWPNRKQMLTYTSVVLAFLAFMVALVAGADLGLTKLVMLVFG</sequence>
<keyword id="KW-1003">Cell membrane</keyword>
<keyword id="KW-0472">Membrane</keyword>
<keyword id="KW-0653">Protein transport</keyword>
<keyword id="KW-1185">Reference proteome</keyword>
<keyword id="KW-0811">Translocation</keyword>
<keyword id="KW-0812">Transmembrane</keyword>
<keyword id="KW-1133">Transmembrane helix</keyword>
<keyword id="KW-0813">Transport</keyword>
<gene>
    <name evidence="1" type="primary">secE</name>
    <name type="ordered locus">Rv0638</name>
    <name type="ORF">MTCY20H10.19</name>
</gene>
<feature type="chain" id="PRO_0000104168" description="Protein translocase subunit SecE">
    <location>
        <begin position="1"/>
        <end position="161"/>
    </location>
</feature>
<feature type="transmembrane region" description="Helical" evidence="1">
    <location>
        <begin position="133"/>
        <end position="153"/>
    </location>
</feature>
<feature type="region of interest" description="Disordered" evidence="2">
    <location>
        <begin position="1"/>
        <end position="80"/>
    </location>
</feature>
<feature type="compositionally biased region" description="Acidic residues" evidence="2">
    <location>
        <begin position="1"/>
        <end position="12"/>
    </location>
</feature>
<protein>
    <recommendedName>
        <fullName evidence="1">Protein translocase subunit SecE</fullName>
    </recommendedName>
</protein>
<comment type="function">
    <text evidence="1">Essential subunit of the Sec protein translocation channel SecYEG. Clamps together the 2 halves of SecY. May contact the channel plug during translocation.</text>
</comment>
<comment type="subunit">
    <text evidence="1">Component of the Sec protein translocase complex. Heterotrimer consisting of SecY, SecE and SecG subunits. The heterotrimers can form oligomers, although 1 heterotrimer is thought to be able to translocate proteins. Interacts with the ribosome. Interacts with SecDF, and other proteins may be involved. Interacts with SecA.</text>
</comment>
<comment type="subcellular location">
    <subcellularLocation>
        <location evidence="1">Cell membrane</location>
        <topology evidence="1">Single-pass membrane protein</topology>
    </subcellularLocation>
</comment>
<comment type="similarity">
    <text evidence="1">Belongs to the SecE/SEC61-gamma family.</text>
</comment>
<dbReference type="EMBL" id="AL123456">
    <property type="protein sequence ID" value="CCP43381.1"/>
    <property type="molecule type" value="Genomic_DNA"/>
</dbReference>
<dbReference type="PIR" id="C70613">
    <property type="entry name" value="C70613"/>
</dbReference>
<dbReference type="RefSeq" id="WP_003403284.1">
    <property type="nucleotide sequence ID" value="NZ_NVQJ01000007.1"/>
</dbReference>
<dbReference type="RefSeq" id="YP_177743.1">
    <property type="nucleotide sequence ID" value="NC_000962.3"/>
</dbReference>
<dbReference type="SMR" id="P9WGN7"/>
<dbReference type="FunCoup" id="P9WGN7">
    <property type="interactions" value="23"/>
</dbReference>
<dbReference type="STRING" id="83332.Rv0638"/>
<dbReference type="PaxDb" id="83332-Rv0638"/>
<dbReference type="GeneID" id="888042"/>
<dbReference type="KEGG" id="mtu:Rv0638"/>
<dbReference type="KEGG" id="mtv:RVBD_0638"/>
<dbReference type="TubercuList" id="Rv0638"/>
<dbReference type="eggNOG" id="COG0690">
    <property type="taxonomic scope" value="Bacteria"/>
</dbReference>
<dbReference type="InParanoid" id="P9WGN7"/>
<dbReference type="OrthoDB" id="9805743at2"/>
<dbReference type="Reactome" id="R-HSA-1222387">
    <property type="pathway name" value="Tolerance of reactive oxygen produced by macrophages"/>
</dbReference>
<dbReference type="Proteomes" id="UP000001584">
    <property type="component" value="Chromosome"/>
</dbReference>
<dbReference type="GO" id="GO:0009274">
    <property type="term" value="C:peptidoglycan-based cell wall"/>
    <property type="evidence" value="ECO:0007005"/>
    <property type="project" value="MTBBASE"/>
</dbReference>
<dbReference type="GO" id="GO:0005886">
    <property type="term" value="C:plasma membrane"/>
    <property type="evidence" value="ECO:0007005"/>
    <property type="project" value="MTBBASE"/>
</dbReference>
<dbReference type="GO" id="GO:0008320">
    <property type="term" value="F:protein transmembrane transporter activity"/>
    <property type="evidence" value="ECO:0000318"/>
    <property type="project" value="GO_Central"/>
</dbReference>
<dbReference type="GO" id="GO:0065002">
    <property type="term" value="P:intracellular protein transmembrane transport"/>
    <property type="evidence" value="ECO:0007669"/>
    <property type="project" value="UniProtKB-UniRule"/>
</dbReference>
<dbReference type="GO" id="GO:0009306">
    <property type="term" value="P:protein secretion"/>
    <property type="evidence" value="ECO:0007669"/>
    <property type="project" value="UniProtKB-UniRule"/>
</dbReference>
<dbReference type="GO" id="GO:0006605">
    <property type="term" value="P:protein targeting"/>
    <property type="evidence" value="ECO:0007669"/>
    <property type="project" value="UniProtKB-UniRule"/>
</dbReference>
<dbReference type="GO" id="GO:0043952">
    <property type="term" value="P:protein transport by the Sec complex"/>
    <property type="evidence" value="ECO:0000318"/>
    <property type="project" value="GO_Central"/>
</dbReference>
<dbReference type="FunFam" id="1.20.5.1030:FF:000004">
    <property type="entry name" value="Protein translocase subunit SecE"/>
    <property type="match status" value="1"/>
</dbReference>
<dbReference type="Gene3D" id="1.20.5.1030">
    <property type="entry name" value="Preprotein translocase secy subunit"/>
    <property type="match status" value="1"/>
</dbReference>
<dbReference type="HAMAP" id="MF_00422">
    <property type="entry name" value="SecE"/>
    <property type="match status" value="1"/>
</dbReference>
<dbReference type="InterPro" id="IPR005807">
    <property type="entry name" value="SecE_bac"/>
</dbReference>
<dbReference type="InterPro" id="IPR038379">
    <property type="entry name" value="SecE_sf"/>
</dbReference>
<dbReference type="InterPro" id="IPR001901">
    <property type="entry name" value="Translocase_SecE/Sec61-g"/>
</dbReference>
<dbReference type="NCBIfam" id="NF005782">
    <property type="entry name" value="PRK07597.9-1"/>
    <property type="match status" value="1"/>
</dbReference>
<dbReference type="NCBIfam" id="TIGR00964">
    <property type="entry name" value="secE_bact"/>
    <property type="match status" value="1"/>
</dbReference>
<dbReference type="PANTHER" id="PTHR33910">
    <property type="entry name" value="PROTEIN TRANSLOCASE SUBUNIT SECE"/>
    <property type="match status" value="1"/>
</dbReference>
<dbReference type="PANTHER" id="PTHR33910:SF1">
    <property type="entry name" value="PROTEIN TRANSLOCASE SUBUNIT SECE"/>
    <property type="match status" value="1"/>
</dbReference>
<dbReference type="Pfam" id="PF00584">
    <property type="entry name" value="SecE"/>
    <property type="match status" value="1"/>
</dbReference>
<dbReference type="PROSITE" id="PS01067">
    <property type="entry name" value="SECE_SEC61G"/>
    <property type="match status" value="1"/>
</dbReference>
<reference key="1">
    <citation type="journal article" date="1998" name="Nature">
        <title>Deciphering the biology of Mycobacterium tuberculosis from the complete genome sequence.</title>
        <authorList>
            <person name="Cole S.T."/>
            <person name="Brosch R."/>
            <person name="Parkhill J."/>
            <person name="Garnier T."/>
            <person name="Churcher C.M."/>
            <person name="Harris D.E."/>
            <person name="Gordon S.V."/>
            <person name="Eiglmeier K."/>
            <person name="Gas S."/>
            <person name="Barry C.E. III"/>
            <person name="Tekaia F."/>
            <person name="Badcock K."/>
            <person name="Basham D."/>
            <person name="Brown D."/>
            <person name="Chillingworth T."/>
            <person name="Connor R."/>
            <person name="Davies R.M."/>
            <person name="Devlin K."/>
            <person name="Feltwell T."/>
            <person name="Gentles S."/>
            <person name="Hamlin N."/>
            <person name="Holroyd S."/>
            <person name="Hornsby T."/>
            <person name="Jagels K."/>
            <person name="Krogh A."/>
            <person name="McLean J."/>
            <person name="Moule S."/>
            <person name="Murphy L.D."/>
            <person name="Oliver S."/>
            <person name="Osborne J."/>
            <person name="Quail M.A."/>
            <person name="Rajandream M.A."/>
            <person name="Rogers J."/>
            <person name="Rutter S."/>
            <person name="Seeger K."/>
            <person name="Skelton S."/>
            <person name="Squares S."/>
            <person name="Squares R."/>
            <person name="Sulston J.E."/>
            <person name="Taylor K."/>
            <person name="Whitehead S."/>
            <person name="Barrell B.G."/>
        </authorList>
    </citation>
    <scope>NUCLEOTIDE SEQUENCE [LARGE SCALE GENOMIC DNA]</scope>
    <source>
        <strain>ATCC 25618 / H37Rv</strain>
    </source>
</reference>
<reference key="2">
    <citation type="journal article" date="2011" name="Mol. Cell. Proteomics">
        <title>Proteogenomic analysis of Mycobacterium tuberculosis by high resolution mass spectrometry.</title>
        <authorList>
            <person name="Kelkar D.S."/>
            <person name="Kumar D."/>
            <person name="Kumar P."/>
            <person name="Balakrishnan L."/>
            <person name="Muthusamy B."/>
            <person name="Yadav A.K."/>
            <person name="Shrivastava P."/>
            <person name="Marimuthu A."/>
            <person name="Anand S."/>
            <person name="Sundaram H."/>
            <person name="Kingsbury R."/>
            <person name="Harsha H.C."/>
            <person name="Nair B."/>
            <person name="Prasad T.S."/>
            <person name="Chauhan D.S."/>
            <person name="Katoch K."/>
            <person name="Katoch V.M."/>
            <person name="Kumar P."/>
            <person name="Chaerkady R."/>
            <person name="Ramachandran S."/>
            <person name="Dash D."/>
            <person name="Pandey A."/>
        </authorList>
    </citation>
    <scope>IDENTIFICATION BY MASS SPECTROMETRY [LARGE SCALE ANALYSIS]</scope>
    <source>
        <strain>ATCC 25618 / H37Rv</strain>
    </source>
</reference>
<name>SECE_MYCTU</name>
<organism>
    <name type="scientific">Mycobacterium tuberculosis (strain ATCC 25618 / H37Rv)</name>
    <dbReference type="NCBI Taxonomy" id="83332"/>
    <lineage>
        <taxon>Bacteria</taxon>
        <taxon>Bacillati</taxon>
        <taxon>Actinomycetota</taxon>
        <taxon>Actinomycetes</taxon>
        <taxon>Mycobacteriales</taxon>
        <taxon>Mycobacteriaceae</taxon>
        <taxon>Mycobacterium</taxon>
        <taxon>Mycobacterium tuberculosis complex</taxon>
    </lineage>
</organism>
<proteinExistence type="evidence at protein level"/>
<accession>P9WGN7</accession>
<accession>L0T4G1</accession>
<accession>P0A5Z0</accession>
<accession>P96929</accession>